<reference key="1">
    <citation type="journal article" date="2000" name="Nature">
        <title>Sequence and analysis of chromosome 5 of the plant Arabidopsis thaliana.</title>
        <authorList>
            <person name="Tabata S."/>
            <person name="Kaneko T."/>
            <person name="Nakamura Y."/>
            <person name="Kotani H."/>
            <person name="Kato T."/>
            <person name="Asamizu E."/>
            <person name="Miyajima N."/>
            <person name="Sasamoto S."/>
            <person name="Kimura T."/>
            <person name="Hosouchi T."/>
            <person name="Kawashima K."/>
            <person name="Kohara M."/>
            <person name="Matsumoto M."/>
            <person name="Matsuno A."/>
            <person name="Muraki A."/>
            <person name="Nakayama S."/>
            <person name="Nakazaki N."/>
            <person name="Naruo K."/>
            <person name="Okumura S."/>
            <person name="Shinpo S."/>
            <person name="Takeuchi C."/>
            <person name="Wada T."/>
            <person name="Watanabe A."/>
            <person name="Yamada M."/>
            <person name="Yasuda M."/>
            <person name="Sato S."/>
            <person name="de la Bastide M."/>
            <person name="Huang E."/>
            <person name="Spiegel L."/>
            <person name="Gnoj L."/>
            <person name="O'Shaughnessy A."/>
            <person name="Preston R."/>
            <person name="Habermann K."/>
            <person name="Murray J."/>
            <person name="Johnson D."/>
            <person name="Rohlfing T."/>
            <person name="Nelson J."/>
            <person name="Stoneking T."/>
            <person name="Pepin K."/>
            <person name="Spieth J."/>
            <person name="Sekhon M."/>
            <person name="Armstrong J."/>
            <person name="Becker M."/>
            <person name="Belter E."/>
            <person name="Cordum H."/>
            <person name="Cordes M."/>
            <person name="Courtney L."/>
            <person name="Courtney W."/>
            <person name="Dante M."/>
            <person name="Du H."/>
            <person name="Edwards J."/>
            <person name="Fryman J."/>
            <person name="Haakensen B."/>
            <person name="Lamar E."/>
            <person name="Latreille P."/>
            <person name="Leonard S."/>
            <person name="Meyer R."/>
            <person name="Mulvaney E."/>
            <person name="Ozersky P."/>
            <person name="Riley A."/>
            <person name="Strowmatt C."/>
            <person name="Wagner-McPherson C."/>
            <person name="Wollam A."/>
            <person name="Yoakum M."/>
            <person name="Bell M."/>
            <person name="Dedhia N."/>
            <person name="Parnell L."/>
            <person name="Shah R."/>
            <person name="Rodriguez M."/>
            <person name="Hoon See L."/>
            <person name="Vil D."/>
            <person name="Baker J."/>
            <person name="Kirchoff K."/>
            <person name="Toth K."/>
            <person name="King L."/>
            <person name="Bahret A."/>
            <person name="Miller B."/>
            <person name="Marra M.A."/>
            <person name="Martienssen R."/>
            <person name="McCombie W.R."/>
            <person name="Wilson R.K."/>
            <person name="Murphy G."/>
            <person name="Bancroft I."/>
            <person name="Volckaert G."/>
            <person name="Wambutt R."/>
            <person name="Duesterhoeft A."/>
            <person name="Stiekema W."/>
            <person name="Pohl T."/>
            <person name="Entian K.-D."/>
            <person name="Terryn N."/>
            <person name="Hartley N."/>
            <person name="Bent E."/>
            <person name="Johnson S."/>
            <person name="Langham S.-A."/>
            <person name="McCullagh B."/>
            <person name="Robben J."/>
            <person name="Grymonprez B."/>
            <person name="Zimmermann W."/>
            <person name="Ramsperger U."/>
            <person name="Wedler H."/>
            <person name="Balke K."/>
            <person name="Wedler E."/>
            <person name="Peters S."/>
            <person name="van Staveren M."/>
            <person name="Dirkse W."/>
            <person name="Mooijman P."/>
            <person name="Klein Lankhorst R."/>
            <person name="Weitzenegger T."/>
            <person name="Bothe G."/>
            <person name="Rose M."/>
            <person name="Hauf J."/>
            <person name="Berneiser S."/>
            <person name="Hempel S."/>
            <person name="Feldpausch M."/>
            <person name="Lamberth S."/>
            <person name="Villarroel R."/>
            <person name="Gielen J."/>
            <person name="Ardiles W."/>
            <person name="Bents O."/>
            <person name="Lemcke K."/>
            <person name="Kolesov G."/>
            <person name="Mayer K.F.X."/>
            <person name="Rudd S."/>
            <person name="Schoof H."/>
            <person name="Schueller C."/>
            <person name="Zaccaria P."/>
            <person name="Mewes H.-W."/>
            <person name="Bevan M."/>
            <person name="Fransz P.F."/>
        </authorList>
    </citation>
    <scope>NUCLEOTIDE SEQUENCE [LARGE SCALE GENOMIC DNA]</scope>
    <source>
        <strain>cv. Columbia</strain>
    </source>
</reference>
<reference key="2">
    <citation type="journal article" date="2017" name="Plant J.">
        <title>Araport11: a complete reannotation of the Arabidopsis thaliana reference genome.</title>
        <authorList>
            <person name="Cheng C.Y."/>
            <person name="Krishnakumar V."/>
            <person name="Chan A.P."/>
            <person name="Thibaud-Nissen F."/>
            <person name="Schobel S."/>
            <person name="Town C.D."/>
        </authorList>
    </citation>
    <scope>GENOME REANNOTATION</scope>
    <source>
        <strain>cv. Columbia</strain>
    </source>
</reference>
<reference key="3">
    <citation type="journal article" date="2003" name="Science">
        <title>Empirical analysis of transcriptional activity in the Arabidopsis genome.</title>
        <authorList>
            <person name="Yamada K."/>
            <person name="Lim J."/>
            <person name="Dale J.M."/>
            <person name="Chen H."/>
            <person name="Shinn P."/>
            <person name="Palm C.J."/>
            <person name="Southwick A.M."/>
            <person name="Wu H.C."/>
            <person name="Kim C.J."/>
            <person name="Nguyen M."/>
            <person name="Pham P.K."/>
            <person name="Cheuk R.F."/>
            <person name="Karlin-Newmann G."/>
            <person name="Liu S.X."/>
            <person name="Lam B."/>
            <person name="Sakano H."/>
            <person name="Wu T."/>
            <person name="Yu G."/>
            <person name="Miranda M."/>
            <person name="Quach H.L."/>
            <person name="Tripp M."/>
            <person name="Chang C.H."/>
            <person name="Lee J.M."/>
            <person name="Toriumi M.J."/>
            <person name="Chan M.M."/>
            <person name="Tang C.C."/>
            <person name="Onodera C.S."/>
            <person name="Deng J.M."/>
            <person name="Akiyama K."/>
            <person name="Ansari Y."/>
            <person name="Arakawa T."/>
            <person name="Banh J."/>
            <person name="Banno F."/>
            <person name="Bowser L."/>
            <person name="Brooks S.Y."/>
            <person name="Carninci P."/>
            <person name="Chao Q."/>
            <person name="Choy N."/>
            <person name="Enju A."/>
            <person name="Goldsmith A.D."/>
            <person name="Gurjal M."/>
            <person name="Hansen N.F."/>
            <person name="Hayashizaki Y."/>
            <person name="Johnson-Hopson C."/>
            <person name="Hsuan V.W."/>
            <person name="Iida K."/>
            <person name="Karnes M."/>
            <person name="Khan S."/>
            <person name="Koesema E."/>
            <person name="Ishida J."/>
            <person name="Jiang P.X."/>
            <person name="Jones T."/>
            <person name="Kawai J."/>
            <person name="Kamiya A."/>
            <person name="Meyers C."/>
            <person name="Nakajima M."/>
            <person name="Narusaka M."/>
            <person name="Seki M."/>
            <person name="Sakurai T."/>
            <person name="Satou M."/>
            <person name="Tamse R."/>
            <person name="Vaysberg M."/>
            <person name="Wallender E.K."/>
            <person name="Wong C."/>
            <person name="Yamamura Y."/>
            <person name="Yuan S."/>
            <person name="Shinozaki K."/>
            <person name="Davis R.W."/>
            <person name="Theologis A."/>
            <person name="Ecker J.R."/>
        </authorList>
    </citation>
    <scope>NUCLEOTIDE SEQUENCE [LARGE SCALE MRNA]</scope>
    <source>
        <strain>cv. Columbia</strain>
    </source>
</reference>
<reference key="4">
    <citation type="submission" date="2006-07" db="EMBL/GenBank/DDBJ databases">
        <title>Large-scale analysis of RIKEN Arabidopsis full-length (RAFL) cDNAs.</title>
        <authorList>
            <person name="Totoki Y."/>
            <person name="Seki M."/>
            <person name="Ishida J."/>
            <person name="Nakajima M."/>
            <person name="Enju A."/>
            <person name="Kamiya A."/>
            <person name="Narusaka M."/>
            <person name="Shin-i T."/>
            <person name="Nakagawa M."/>
            <person name="Sakamoto N."/>
            <person name="Oishi K."/>
            <person name="Kohara Y."/>
            <person name="Kobayashi M."/>
            <person name="Toyoda A."/>
            <person name="Sakaki Y."/>
            <person name="Sakurai T."/>
            <person name="Iida K."/>
            <person name="Akiyama K."/>
            <person name="Satou M."/>
            <person name="Toyoda T."/>
            <person name="Konagaya A."/>
            <person name="Carninci P."/>
            <person name="Kawai J."/>
            <person name="Hayashizaki Y."/>
            <person name="Shinozaki K."/>
        </authorList>
    </citation>
    <scope>NUCLEOTIDE SEQUENCE [LARGE SCALE MRNA]</scope>
    <source>
        <strain>cv. Columbia</strain>
    </source>
</reference>
<reference key="5">
    <citation type="journal article" date="2008" name="BMC Genomics">
        <title>Genome-wide analysis of CCCH zinc finger family in Arabidopsis and rice.</title>
        <authorList>
            <person name="Wang D."/>
            <person name="Guo Y."/>
            <person name="Wu C."/>
            <person name="Yang G."/>
            <person name="Li Y."/>
            <person name="Zheng C."/>
        </authorList>
    </citation>
    <scope>NOMENCLATURE</scope>
</reference>
<organism>
    <name type="scientific">Arabidopsis thaliana</name>
    <name type="common">Mouse-ear cress</name>
    <dbReference type="NCBI Taxonomy" id="3702"/>
    <lineage>
        <taxon>Eukaryota</taxon>
        <taxon>Viridiplantae</taxon>
        <taxon>Streptophyta</taxon>
        <taxon>Embryophyta</taxon>
        <taxon>Tracheophyta</taxon>
        <taxon>Spermatophyta</taxon>
        <taxon>Magnoliopsida</taxon>
        <taxon>eudicotyledons</taxon>
        <taxon>Gunneridae</taxon>
        <taxon>Pentapetalae</taxon>
        <taxon>rosids</taxon>
        <taxon>malvids</taxon>
        <taxon>Brassicales</taxon>
        <taxon>Brassicaceae</taxon>
        <taxon>Camelineae</taxon>
        <taxon>Arabidopsis</taxon>
    </lineage>
</organism>
<name>C3H56_ARATH</name>
<dbReference type="EMBL" id="AL353013">
    <property type="protein sequence ID" value="CAB88249.1"/>
    <property type="molecule type" value="Genomic_DNA"/>
</dbReference>
<dbReference type="EMBL" id="CP002688">
    <property type="protein sequence ID" value="AED91821.1"/>
    <property type="molecule type" value="Genomic_DNA"/>
</dbReference>
<dbReference type="EMBL" id="AY099761">
    <property type="protein sequence ID" value="AAM20612.1"/>
    <property type="molecule type" value="mRNA"/>
</dbReference>
<dbReference type="EMBL" id="AY128891">
    <property type="protein sequence ID" value="AAM91291.1"/>
    <property type="molecule type" value="mRNA"/>
</dbReference>
<dbReference type="EMBL" id="AK227145">
    <property type="protein sequence ID" value="BAE99190.1"/>
    <property type="molecule type" value="mRNA"/>
</dbReference>
<dbReference type="PIR" id="T49899">
    <property type="entry name" value="T49899"/>
</dbReference>
<dbReference type="RefSeq" id="NP_196789.1">
    <property type="nucleotide sequence ID" value="NM_121288.5"/>
</dbReference>
<dbReference type="SMR" id="Q9LXV4"/>
<dbReference type="BioGRID" id="16403">
    <property type="interactions" value="1"/>
</dbReference>
<dbReference type="FunCoup" id="Q9LXV4">
    <property type="interactions" value="600"/>
</dbReference>
<dbReference type="STRING" id="3702.Q9LXV4"/>
<dbReference type="GlyGen" id="Q9LXV4">
    <property type="glycosylation" value="1 site, 1 O-linked glycan (1 site)"/>
</dbReference>
<dbReference type="iPTMnet" id="Q9LXV4"/>
<dbReference type="PaxDb" id="3702-AT5G12850.1"/>
<dbReference type="ProteomicsDB" id="239113"/>
<dbReference type="EnsemblPlants" id="AT5G12850.1">
    <property type="protein sequence ID" value="AT5G12850.1"/>
    <property type="gene ID" value="AT5G12850"/>
</dbReference>
<dbReference type="GeneID" id="831125"/>
<dbReference type="Gramene" id="AT5G12850.1">
    <property type="protein sequence ID" value="AT5G12850.1"/>
    <property type="gene ID" value="AT5G12850"/>
</dbReference>
<dbReference type="KEGG" id="ath:AT5G12850"/>
<dbReference type="Araport" id="AT5G12850"/>
<dbReference type="TAIR" id="AT5G12850">
    <property type="gene designation" value="TZF8"/>
</dbReference>
<dbReference type="eggNOG" id="KOG1595">
    <property type="taxonomic scope" value="Eukaryota"/>
</dbReference>
<dbReference type="HOGENOM" id="CLU_015068_1_0_1"/>
<dbReference type="InParanoid" id="Q9LXV4"/>
<dbReference type="OMA" id="FAHANEE"/>
<dbReference type="OrthoDB" id="410307at2759"/>
<dbReference type="PhylomeDB" id="Q9LXV4"/>
<dbReference type="PRO" id="PR:Q9LXV4"/>
<dbReference type="Proteomes" id="UP000006548">
    <property type="component" value="Chromosome 5"/>
</dbReference>
<dbReference type="ExpressionAtlas" id="Q9LXV4">
    <property type="expression patterns" value="baseline and differential"/>
</dbReference>
<dbReference type="GO" id="GO:0005737">
    <property type="term" value="C:cytoplasm"/>
    <property type="evidence" value="ECO:0007005"/>
    <property type="project" value="TAIR"/>
</dbReference>
<dbReference type="GO" id="GO:0003677">
    <property type="term" value="F:DNA binding"/>
    <property type="evidence" value="ECO:0007669"/>
    <property type="project" value="UniProtKB-KW"/>
</dbReference>
<dbReference type="GO" id="GO:0003700">
    <property type="term" value="F:DNA-binding transcription factor activity"/>
    <property type="evidence" value="ECO:0000250"/>
    <property type="project" value="TAIR"/>
</dbReference>
<dbReference type="GO" id="GO:0008270">
    <property type="term" value="F:zinc ion binding"/>
    <property type="evidence" value="ECO:0007669"/>
    <property type="project" value="UniProtKB-KW"/>
</dbReference>
<dbReference type="GO" id="GO:0006355">
    <property type="term" value="P:regulation of DNA-templated transcription"/>
    <property type="evidence" value="ECO:0000304"/>
    <property type="project" value="TAIR"/>
</dbReference>
<dbReference type="FunFam" id="3.30.1370.210:FF:000009">
    <property type="entry name" value="Zinc finger CCCH domain-containing protein 66"/>
    <property type="match status" value="1"/>
</dbReference>
<dbReference type="Gene3D" id="3.30.1370.210">
    <property type="match status" value="1"/>
</dbReference>
<dbReference type="Gene3D" id="1.25.40.20">
    <property type="entry name" value="Ankyrin repeat-containing domain"/>
    <property type="match status" value="1"/>
</dbReference>
<dbReference type="InterPro" id="IPR002110">
    <property type="entry name" value="Ankyrin_rpt"/>
</dbReference>
<dbReference type="InterPro" id="IPR036770">
    <property type="entry name" value="Ankyrin_rpt-contain_sf"/>
</dbReference>
<dbReference type="InterPro" id="IPR045234">
    <property type="entry name" value="Unkempt-like"/>
</dbReference>
<dbReference type="InterPro" id="IPR000571">
    <property type="entry name" value="Znf_CCCH"/>
</dbReference>
<dbReference type="PANTHER" id="PTHR14493">
    <property type="entry name" value="UNKEMPT FAMILY MEMBER"/>
    <property type="match status" value="1"/>
</dbReference>
<dbReference type="PANTHER" id="PTHR14493:SF151">
    <property type="entry name" value="ZINC FINGER CCCH DOMAIN-CONTAINING PROTEIN 56"/>
    <property type="match status" value="1"/>
</dbReference>
<dbReference type="Pfam" id="PF12796">
    <property type="entry name" value="Ank_2"/>
    <property type="match status" value="1"/>
</dbReference>
<dbReference type="Pfam" id="PF25512">
    <property type="entry name" value="zf-CCCH_AtC3H23"/>
    <property type="match status" value="1"/>
</dbReference>
<dbReference type="SMART" id="SM00248">
    <property type="entry name" value="ANK"/>
    <property type="match status" value="2"/>
</dbReference>
<dbReference type="SMART" id="SM00356">
    <property type="entry name" value="ZnF_C3H1"/>
    <property type="match status" value="1"/>
</dbReference>
<dbReference type="SUPFAM" id="SSF48403">
    <property type="entry name" value="Ankyrin repeat"/>
    <property type="match status" value="1"/>
</dbReference>
<dbReference type="PROSITE" id="PS50297">
    <property type="entry name" value="ANK_REP_REGION"/>
    <property type="match status" value="1"/>
</dbReference>
<dbReference type="PROSITE" id="PS50088">
    <property type="entry name" value="ANK_REPEAT"/>
    <property type="match status" value="1"/>
</dbReference>
<dbReference type="PROSITE" id="PS50103">
    <property type="entry name" value="ZF_C3H1"/>
    <property type="match status" value="2"/>
</dbReference>
<keyword id="KW-0040">ANK repeat</keyword>
<keyword id="KW-0238">DNA-binding</keyword>
<keyword id="KW-0479">Metal-binding</keyword>
<keyword id="KW-0597">Phosphoprotein</keyword>
<keyword id="KW-1185">Reference proteome</keyword>
<keyword id="KW-0677">Repeat</keyword>
<keyword id="KW-0862">Zinc</keyword>
<keyword id="KW-0863">Zinc-finger</keyword>
<proteinExistence type="evidence at transcript level"/>
<accession>Q9LXV4</accession>
<accession>Q8L3W6</accession>
<protein>
    <recommendedName>
        <fullName>Zinc finger CCCH domain-containing protein 56</fullName>
        <shortName>AtC3H56</shortName>
    </recommendedName>
</protein>
<sequence>MCGLAKKLDIEDTLTSLSDQENESLAKPMNDAAEWEHSFSALLEFAADNDVEGFRRQLSDVSCINQMGLWYRRQRFVRRMVLEQRTPLMVASLYGSLDVVKFILSFPEAELNLSCGPDKSTALHCAASGASVNSLDVVKLLLSVGADPNIPDAHGNRPVDVLVVSPHAPGLRTILEEILKKDEIISEDLHASSSSLGSSFRSLSSSPDNGSSLLSLDSVSSPTKPHGTDVTFASEKKEYPIDPSLPDIKSGIYSTDEFRMFSFKIRPCSRAYSHDWTECPFAHPGENARRRDPRKFHYTCVPCPDFKKGSCKQGDMCEYAHGVFECWLHPAQYRTRLCKDGMGCNRRVCFFAHANEELRPLYPSTGSGLPSPRASSAVSASTMDMASVLNMLPGSPSAAQHSFTPPISPSGNGSMPHSSMGWPQQNIPALNLPGSNIQLSRLRSSLNARDIPSEQLSMLHEFEMQRQLAGDMHSPRFMNHSARPKTLNPSNLEELFSAEVASPRFSDQLAVSSVLSPSHKSALLNQLQNNKQSMLSPIKTNLMSSPKNVEQHSLLQQASSPRGGEPISPMNARMKQQLHSRSLSSRDFGSSLPRDLMPTDSGSPLSPWSSWDQTHGSKVDWSVQSDELGRLRKSHSLANNPNREADVSWAQQMLKDSSSPRNGNRVVNMNGARPLTQGGSSVNPHNSDTRESDILDAWLEQLHLDR</sequence>
<evidence type="ECO:0000250" key="1">
    <source>
        <dbReference type="UniProtKB" id="P93755"/>
    </source>
</evidence>
<evidence type="ECO:0000255" key="2">
    <source>
        <dbReference type="PROSITE-ProRule" id="PRU00723"/>
    </source>
</evidence>
<evidence type="ECO:0000256" key="3">
    <source>
        <dbReference type="SAM" id="MobiDB-lite"/>
    </source>
</evidence>
<evidence type="ECO:0000305" key="4"/>
<feature type="chain" id="PRO_0000372009" description="Zinc finger CCCH domain-containing protein 56">
    <location>
        <begin position="1"/>
        <end position="706"/>
    </location>
</feature>
<feature type="repeat" description="ANK 1">
    <location>
        <begin position="83"/>
        <end position="113"/>
    </location>
</feature>
<feature type="repeat" description="ANK 2">
    <location>
        <begin position="118"/>
        <end position="150"/>
    </location>
</feature>
<feature type="zinc finger region" description="C3H1-type 1" evidence="2">
    <location>
        <begin position="302"/>
        <end position="324"/>
    </location>
</feature>
<feature type="zinc finger region" description="C3H1-type 2" evidence="2">
    <location>
        <begin position="332"/>
        <end position="356"/>
    </location>
</feature>
<feature type="region of interest" description="Disordered" evidence="3">
    <location>
        <begin position="211"/>
        <end position="235"/>
    </location>
</feature>
<feature type="region of interest" description="Disordered" evidence="3">
    <location>
        <begin position="396"/>
        <end position="427"/>
    </location>
</feature>
<feature type="region of interest" description="Disordered" evidence="3">
    <location>
        <begin position="545"/>
        <end position="616"/>
    </location>
</feature>
<feature type="region of interest" description="Disordered" evidence="3">
    <location>
        <begin position="652"/>
        <end position="692"/>
    </location>
</feature>
<feature type="compositionally biased region" description="Low complexity" evidence="3">
    <location>
        <begin position="211"/>
        <end position="221"/>
    </location>
</feature>
<feature type="compositionally biased region" description="Polar residues" evidence="3">
    <location>
        <begin position="397"/>
        <end position="427"/>
    </location>
</feature>
<feature type="compositionally biased region" description="Polar residues" evidence="3">
    <location>
        <begin position="545"/>
        <end position="560"/>
    </location>
</feature>
<feature type="compositionally biased region" description="Low complexity" evidence="3">
    <location>
        <begin position="580"/>
        <end position="592"/>
    </location>
</feature>
<feature type="compositionally biased region" description="Polar residues" evidence="3">
    <location>
        <begin position="600"/>
        <end position="616"/>
    </location>
</feature>
<feature type="compositionally biased region" description="Polar residues" evidence="3">
    <location>
        <begin position="652"/>
        <end position="667"/>
    </location>
</feature>
<feature type="compositionally biased region" description="Polar residues" evidence="3">
    <location>
        <begin position="677"/>
        <end position="686"/>
    </location>
</feature>
<feature type="modified residue" description="Phosphoserine" evidence="1">
    <location>
        <position position="568"/>
    </location>
</feature>
<feature type="sequence conflict" description="In Ref. 3; AAM91291/AAM20612." evidence="4" ref="3">
    <original>A</original>
    <variation>V</variation>
    <location>
        <position position="32"/>
    </location>
</feature>
<gene>
    <name type="ordered locus">At5g12850</name>
    <name type="ORF">T24H18.20</name>
</gene>